<organism>
    <name type="scientific">Populus trichocarpa</name>
    <name type="common">Western balsam poplar</name>
    <name type="synonym">Populus balsamifera subsp. trichocarpa</name>
    <dbReference type="NCBI Taxonomy" id="3694"/>
    <lineage>
        <taxon>Eukaryota</taxon>
        <taxon>Viridiplantae</taxon>
        <taxon>Streptophyta</taxon>
        <taxon>Embryophyta</taxon>
        <taxon>Tracheophyta</taxon>
        <taxon>Spermatophyta</taxon>
        <taxon>Magnoliopsida</taxon>
        <taxon>eudicotyledons</taxon>
        <taxon>Gunneridae</taxon>
        <taxon>Pentapetalae</taxon>
        <taxon>rosids</taxon>
        <taxon>fabids</taxon>
        <taxon>Malpighiales</taxon>
        <taxon>Salicaceae</taxon>
        <taxon>Saliceae</taxon>
        <taxon>Populus</taxon>
    </lineage>
</organism>
<protein>
    <recommendedName>
        <fullName>CASP-like protein 2B2</fullName>
        <shortName>PtCASPL2B2</shortName>
    </recommendedName>
</protein>
<gene>
    <name type="ORF">POPTRDRAFT_818956</name>
</gene>
<keyword id="KW-1003">Cell membrane</keyword>
<keyword id="KW-0472">Membrane</keyword>
<keyword id="KW-1185">Reference proteome</keyword>
<keyword id="KW-0812">Transmembrane</keyword>
<keyword id="KW-1133">Transmembrane helix</keyword>
<reference key="1">
    <citation type="journal article" date="2006" name="Science">
        <title>The genome of black cottonwood, Populus trichocarpa (Torr. &amp; Gray).</title>
        <authorList>
            <person name="Tuskan G.A."/>
            <person name="Difazio S."/>
            <person name="Jansson S."/>
            <person name="Bohlmann J."/>
            <person name="Grigoriev I."/>
            <person name="Hellsten U."/>
            <person name="Putnam N."/>
            <person name="Ralph S."/>
            <person name="Rombauts S."/>
            <person name="Salamov A."/>
            <person name="Schein J."/>
            <person name="Sterck L."/>
            <person name="Aerts A."/>
            <person name="Bhalerao R.R."/>
            <person name="Bhalerao R.P."/>
            <person name="Blaudez D."/>
            <person name="Boerjan W."/>
            <person name="Brun A."/>
            <person name="Brunner A."/>
            <person name="Busov V."/>
            <person name="Campbell M."/>
            <person name="Carlson J."/>
            <person name="Chalot M."/>
            <person name="Chapman J."/>
            <person name="Chen G.-L."/>
            <person name="Cooper D."/>
            <person name="Coutinho P.M."/>
            <person name="Couturier J."/>
            <person name="Covert S."/>
            <person name="Cronk Q."/>
            <person name="Cunningham R."/>
            <person name="Davis J."/>
            <person name="Degroeve S."/>
            <person name="Dejardin A."/>
            <person name="dePamphilis C.W."/>
            <person name="Detter J."/>
            <person name="Dirks B."/>
            <person name="Dubchak I."/>
            <person name="Duplessis S."/>
            <person name="Ehlting J."/>
            <person name="Ellis B."/>
            <person name="Gendler K."/>
            <person name="Goodstein D."/>
            <person name="Gribskov M."/>
            <person name="Grimwood J."/>
            <person name="Groover A."/>
            <person name="Gunter L."/>
            <person name="Hamberger B."/>
            <person name="Heinze B."/>
            <person name="Helariutta Y."/>
            <person name="Henrissat B."/>
            <person name="Holligan D."/>
            <person name="Holt R."/>
            <person name="Huang W."/>
            <person name="Islam-Faridi N."/>
            <person name="Jones S."/>
            <person name="Jones-Rhoades M."/>
            <person name="Jorgensen R."/>
            <person name="Joshi C."/>
            <person name="Kangasjaervi J."/>
            <person name="Karlsson J."/>
            <person name="Kelleher C."/>
            <person name="Kirkpatrick R."/>
            <person name="Kirst M."/>
            <person name="Kohler A."/>
            <person name="Kalluri U."/>
            <person name="Larimer F."/>
            <person name="Leebens-Mack J."/>
            <person name="Leple J.-C."/>
            <person name="Locascio P."/>
            <person name="Lou Y."/>
            <person name="Lucas S."/>
            <person name="Martin F."/>
            <person name="Montanini B."/>
            <person name="Napoli C."/>
            <person name="Nelson D.R."/>
            <person name="Nelson C."/>
            <person name="Nieminen K."/>
            <person name="Nilsson O."/>
            <person name="Pereda V."/>
            <person name="Peter G."/>
            <person name="Philippe R."/>
            <person name="Pilate G."/>
            <person name="Poliakov A."/>
            <person name="Razumovskaya J."/>
            <person name="Richardson P."/>
            <person name="Rinaldi C."/>
            <person name="Ritland K."/>
            <person name="Rouze P."/>
            <person name="Ryaboy D."/>
            <person name="Schmutz J."/>
            <person name="Schrader J."/>
            <person name="Segerman B."/>
            <person name="Shin H."/>
            <person name="Siddiqui A."/>
            <person name="Sterky F."/>
            <person name="Terry A."/>
            <person name="Tsai C.-J."/>
            <person name="Uberbacher E."/>
            <person name="Unneberg P."/>
            <person name="Vahala J."/>
            <person name="Wall K."/>
            <person name="Wessler S."/>
            <person name="Yang G."/>
            <person name="Yin T."/>
            <person name="Douglas C."/>
            <person name="Marra M."/>
            <person name="Sandberg G."/>
            <person name="Van de Peer Y."/>
            <person name="Rokhsar D.S."/>
        </authorList>
    </citation>
    <scope>NUCLEOTIDE SEQUENCE [LARGE SCALE GENOMIC DNA]</scope>
    <source>
        <strain>cv. Nisqually</strain>
    </source>
</reference>
<reference key="2">
    <citation type="submission" date="2008-12" db="EMBL/GenBank/DDBJ databases">
        <authorList>
            <consortium name="US DOE Joint Genome Institute (JGI-PGF)"/>
            <person name="Grigoriev I.V."/>
            <person name="Terry A."/>
            <person name="Salamov A.A."/>
            <person name="Otillar R."/>
            <person name="Lou Y."/>
            <person name="Lucas S."/>
            <person name="Hammon N."/>
            <person name="Glavina del Rio T."/>
            <person name="Detter J."/>
            <person name="Kalin E."/>
            <person name="Tice H."/>
            <person name="Pitluck S."/>
            <person name="Chapman J."/>
            <person name="Putnam N.H."/>
            <person name="Brunner A."/>
            <person name="Busov V."/>
            <person name="Campbell M."/>
            <person name="Chalot M."/>
            <person name="Covert S."/>
            <person name="Davis J."/>
            <person name="DiFazio S."/>
            <person name="Gribskov M."/>
            <person name="Gunter L."/>
            <person name="Hamberger B."/>
            <person name="Jansson S."/>
            <person name="Joshi C."/>
            <person name="Larimer F."/>
            <person name="Martin F."/>
            <person name="Napoli C."/>
            <person name="Nelson D."/>
            <person name="Ralph S."/>
            <person name="Rombauts S."/>
            <person name="Rouze P."/>
            <person name="Schrader J."/>
            <person name="Tsai C."/>
            <person name="Vahala J."/>
            <person name="Tuskan G."/>
            <person name="Rokhsar D."/>
        </authorList>
    </citation>
    <scope>GENOME REANNOTATION</scope>
    <source>
        <strain>cv. Nisqually</strain>
    </source>
</reference>
<reference key="3">
    <citation type="journal article" date="2014" name="Plant Physiol.">
        <title>Functional and evolutionary analysis of the CASPARIAN STRIP MEMBRANE DOMAIN PROTEIN family.</title>
        <authorList>
            <person name="Roppolo D."/>
            <person name="Boeckmann B."/>
            <person name="Pfister A."/>
            <person name="Boutet E."/>
            <person name="Rubio M.C."/>
            <person name="Denervaud-Tendon V."/>
            <person name="Vermeer J.E."/>
            <person name="Gheyselinck J."/>
            <person name="Xenarios I."/>
            <person name="Geldner N."/>
        </authorList>
    </citation>
    <scope>GENE FAMILY</scope>
    <scope>NOMENCLATURE</scope>
</reference>
<comment type="subunit">
    <text evidence="1">Homodimer and heterodimers.</text>
</comment>
<comment type="subcellular location">
    <subcellularLocation>
        <location evidence="1">Cell membrane</location>
        <topology evidence="1">Multi-pass membrane protein</topology>
    </subcellularLocation>
</comment>
<comment type="similarity">
    <text evidence="3">Belongs to the Casparian strip membrane proteins (CASP) family.</text>
</comment>
<proteinExistence type="inferred from homology"/>
<feature type="chain" id="PRO_0000412045" description="CASP-like protein 2B2">
    <location>
        <begin position="1"/>
        <end position="202"/>
    </location>
</feature>
<feature type="topological domain" description="Cytoplasmic" evidence="2">
    <location>
        <begin position="1"/>
        <end position="29"/>
    </location>
</feature>
<feature type="transmembrane region" description="Helical" evidence="2">
    <location>
        <begin position="30"/>
        <end position="50"/>
    </location>
</feature>
<feature type="topological domain" description="Extracellular" evidence="2">
    <location>
        <begin position="51"/>
        <end position="72"/>
    </location>
</feature>
<feature type="transmembrane region" description="Helical" evidence="2">
    <location>
        <begin position="73"/>
        <end position="93"/>
    </location>
</feature>
<feature type="topological domain" description="Cytoplasmic" evidence="2">
    <location>
        <begin position="94"/>
        <end position="118"/>
    </location>
</feature>
<feature type="transmembrane region" description="Helical" evidence="2">
    <location>
        <begin position="119"/>
        <end position="139"/>
    </location>
</feature>
<feature type="topological domain" description="Extracellular" evidence="2">
    <location>
        <begin position="140"/>
        <end position="164"/>
    </location>
</feature>
<feature type="transmembrane region" description="Helical" evidence="2">
    <location>
        <begin position="165"/>
        <end position="185"/>
    </location>
</feature>
<feature type="topological domain" description="Cytoplasmic" evidence="2">
    <location>
        <begin position="186"/>
        <end position="202"/>
    </location>
</feature>
<accession>B9HD38</accession>
<sequence>MSYLGVGVSPGNVPVYHGMNLKVIDRRVRLAELVLRCVICALGVLAAVLVGTDTQVKEIFSIQKKARFTDMKALVFLVVANGIAAAYSLVQGVRCVVGMVKGSVLFSKPLAWVIFSGDQMMAYLTLSAVAAAVQSASFAKLGQPDLQWMKICNMYGKFCNQVGEGIASALLVSVSMVVLSCISSFSLFRLYGGNKGKDGARW</sequence>
<dbReference type="EMBL" id="CM009295">
    <property type="protein sequence ID" value="EEE91426.1"/>
    <property type="molecule type" value="Genomic_DNA"/>
</dbReference>
<dbReference type="RefSeq" id="XP_002307903.1">
    <property type="nucleotide sequence ID" value="XM_002307867.2"/>
</dbReference>
<dbReference type="SMR" id="B9HD38"/>
<dbReference type="FunCoup" id="B9HD38">
    <property type="interactions" value="108"/>
</dbReference>
<dbReference type="STRING" id="3694.B9HD38"/>
<dbReference type="EnsemblPlants" id="Potri.006G016900.1.v4.1">
    <property type="protein sequence ID" value="Potri.006G016900.1.v4.1"/>
    <property type="gene ID" value="Potri.006G016900.v4.1"/>
</dbReference>
<dbReference type="Gramene" id="Potri.006G016900.1.v4.1">
    <property type="protein sequence ID" value="Potri.006G016900.1.v4.1"/>
    <property type="gene ID" value="Potri.006G016900.v4.1"/>
</dbReference>
<dbReference type="KEGG" id="pop:7495626"/>
<dbReference type="eggNOG" id="ENOG502QQH2">
    <property type="taxonomic scope" value="Eukaryota"/>
</dbReference>
<dbReference type="HOGENOM" id="CLU_066104_0_1_1"/>
<dbReference type="InParanoid" id="B9HD38"/>
<dbReference type="OMA" id="ICTMYGR"/>
<dbReference type="OrthoDB" id="689701at2759"/>
<dbReference type="Proteomes" id="UP000006729">
    <property type="component" value="Chromosome 6"/>
</dbReference>
<dbReference type="ExpressionAtlas" id="B9HD38">
    <property type="expression patterns" value="baseline"/>
</dbReference>
<dbReference type="GO" id="GO:0005886">
    <property type="term" value="C:plasma membrane"/>
    <property type="evidence" value="ECO:0007669"/>
    <property type="project" value="UniProtKB-SubCell"/>
</dbReference>
<dbReference type="InterPro" id="IPR006459">
    <property type="entry name" value="CASP/CASPL"/>
</dbReference>
<dbReference type="InterPro" id="IPR006702">
    <property type="entry name" value="CASP_dom"/>
</dbReference>
<dbReference type="NCBIfam" id="TIGR01569">
    <property type="entry name" value="A_tha_TIGR01569"/>
    <property type="match status" value="1"/>
</dbReference>
<dbReference type="PANTHER" id="PTHR33573:SF64">
    <property type="entry name" value="CASP-LIKE PROTEIN 2B1"/>
    <property type="match status" value="1"/>
</dbReference>
<dbReference type="PANTHER" id="PTHR33573">
    <property type="entry name" value="CASP-LIKE PROTEIN 4A4"/>
    <property type="match status" value="1"/>
</dbReference>
<dbReference type="Pfam" id="PF04535">
    <property type="entry name" value="CASP_dom"/>
    <property type="match status" value="1"/>
</dbReference>
<name>CSPLE_POPTR</name>
<evidence type="ECO:0000250" key="1"/>
<evidence type="ECO:0000255" key="2"/>
<evidence type="ECO:0000305" key="3"/>